<proteinExistence type="inferred from homology"/>
<sequence length="1097" mass="131147">MVNNNKRKEIENQENDNDDDNDGLLTYKKFKDVDYDSIRSKELQTIAKSLGLPNNGKKQEVYKRIEGYFLSKKVKNDLTNSTTNQPPQLQQKQPQQKQYVLLIKDVDQLEIYFWKAFRNMIIFKNIFSNFKSKQFGYHDLIGINENFLKSYSNSLEIIKDNIKGNINHQIIRSVNDIVNIIKTLKKKDNETISFYTTLFSTFSSSSSTTTTMQSTKSLIFQFDENIDLWIQRMILNENLVALDQFIKFFKINSDVLKKSIEMHINPSFFNVFSYNNLKIYNYLKSINAIPTSHIKQRFSNIDLSESLSFDYKFKRLIKSYKLLVDPTKFKEIREIHQQQQQQQQQQQQQQQQQQQEQQKQQEQKQQQQEQEQQQQQQQQQQQQQQQQQEQQQQQEQQQQEQQQEQEQQQQQQQEEQQQEQQQQQQQQQQQQEQQEQEQQQQQQQQQQQQQQQQQQQQQQQQQQQQQQQQQQQQQQQQQQQQQQQQQQQQQQQQQQREGRQLQILDYIEKLDQLILELNEIQFSHFTDDQLNSTIKNLLNQTKTTTTTPILITNNNNCSDLKDIIKKYYKSIYLFLKIIEEGKHDRNLMRPFHYYLYFKKKMNVSQLYEIFCGFFIKKYDDCLIFFKSILIDQQLERNQRLELVSKILDIENGVSFQNIGSNFNFTSFNSFCRVVFSTNDTELIDHLIKTIKKLQLAQNSKTQFPSISYIISINFQYINKNEIVDFFFENYRNETTLFDDQNQNWNNNHVNIIDHIEKIMESIGKKLQLYFVKYSNWFTNGNKNNEKKYNVNILLDQLKRAISKPLLYSFFFDSGYYCNTTLLNIFGWSLENGNEVVINFFLPNEIFKQPFRFSDIIYGAPSPNKIPNLIKLIFNNISKESIEPKLYQVKGNFNIPHLYYGRDDFIPLTSTISTTNSEEVGQFIIGETKSFDFIISPRMLFICLYYLDRFEDIFYLFDKIPEIFSSTYFPNFTKESYLYNICSSYYLELLINYFIENLNDNTINHLYNCLCVASGKGFTQIFKNILSSNKNSQSLLKVRTKTNQSSLFQLNFLCGMVLKSIDSSNFQLSNLLIDSIDFPPKNKRVLNQKYLVHLIINK</sequence>
<protein>
    <recommendedName>
        <fullName>UPF0746 protein DDB_G0281095</fullName>
    </recommendedName>
</protein>
<keyword id="KW-0175">Coiled coil</keyword>
<keyword id="KW-0238">DNA-binding</keyword>
<keyword id="KW-1185">Reference proteome</keyword>
<accession>Q54UG3</accession>
<gene>
    <name type="ORF">DDB_G0281095</name>
</gene>
<reference key="1">
    <citation type="journal article" date="2005" name="Nature">
        <title>The genome of the social amoeba Dictyostelium discoideum.</title>
        <authorList>
            <person name="Eichinger L."/>
            <person name="Pachebat J.A."/>
            <person name="Gloeckner G."/>
            <person name="Rajandream M.A."/>
            <person name="Sucgang R."/>
            <person name="Berriman M."/>
            <person name="Song J."/>
            <person name="Olsen R."/>
            <person name="Szafranski K."/>
            <person name="Xu Q."/>
            <person name="Tunggal B."/>
            <person name="Kummerfeld S."/>
            <person name="Madera M."/>
            <person name="Konfortov B.A."/>
            <person name="Rivero F."/>
            <person name="Bankier A.T."/>
            <person name="Lehmann R."/>
            <person name="Hamlin N."/>
            <person name="Davies R."/>
            <person name="Gaudet P."/>
            <person name="Fey P."/>
            <person name="Pilcher K."/>
            <person name="Chen G."/>
            <person name="Saunders D."/>
            <person name="Sodergren E.J."/>
            <person name="Davis P."/>
            <person name="Kerhornou A."/>
            <person name="Nie X."/>
            <person name="Hall N."/>
            <person name="Anjard C."/>
            <person name="Hemphill L."/>
            <person name="Bason N."/>
            <person name="Farbrother P."/>
            <person name="Desany B."/>
            <person name="Just E."/>
            <person name="Morio T."/>
            <person name="Rost R."/>
            <person name="Churcher C.M."/>
            <person name="Cooper J."/>
            <person name="Haydock S."/>
            <person name="van Driessche N."/>
            <person name="Cronin A."/>
            <person name="Goodhead I."/>
            <person name="Muzny D.M."/>
            <person name="Mourier T."/>
            <person name="Pain A."/>
            <person name="Lu M."/>
            <person name="Harper D."/>
            <person name="Lindsay R."/>
            <person name="Hauser H."/>
            <person name="James K.D."/>
            <person name="Quiles M."/>
            <person name="Madan Babu M."/>
            <person name="Saito T."/>
            <person name="Buchrieser C."/>
            <person name="Wardroper A."/>
            <person name="Felder M."/>
            <person name="Thangavelu M."/>
            <person name="Johnson D."/>
            <person name="Knights A."/>
            <person name="Loulseged H."/>
            <person name="Mungall K.L."/>
            <person name="Oliver K."/>
            <person name="Price C."/>
            <person name="Quail M.A."/>
            <person name="Urushihara H."/>
            <person name="Hernandez J."/>
            <person name="Rabbinowitsch E."/>
            <person name="Steffen D."/>
            <person name="Sanders M."/>
            <person name="Ma J."/>
            <person name="Kohara Y."/>
            <person name="Sharp S."/>
            <person name="Simmonds M.N."/>
            <person name="Spiegler S."/>
            <person name="Tivey A."/>
            <person name="Sugano S."/>
            <person name="White B."/>
            <person name="Walker D."/>
            <person name="Woodward J.R."/>
            <person name="Winckler T."/>
            <person name="Tanaka Y."/>
            <person name="Shaulsky G."/>
            <person name="Schleicher M."/>
            <person name="Weinstock G.M."/>
            <person name="Rosenthal A."/>
            <person name="Cox E.C."/>
            <person name="Chisholm R.L."/>
            <person name="Gibbs R.A."/>
            <person name="Loomis W.F."/>
            <person name="Platzer M."/>
            <person name="Kay R.R."/>
            <person name="Williams J.G."/>
            <person name="Dear P.H."/>
            <person name="Noegel A.A."/>
            <person name="Barrell B.G."/>
            <person name="Kuspa A."/>
        </authorList>
    </citation>
    <scope>NUCLEOTIDE SEQUENCE [LARGE SCALE GENOMIC DNA]</scope>
    <source>
        <strain>AX4</strain>
    </source>
</reference>
<comment type="similarity">
    <text evidence="4">Belongs to the UPF0746 family.</text>
</comment>
<name>Y1095_DICDI</name>
<evidence type="ECO:0000255" key="1"/>
<evidence type="ECO:0000255" key="2">
    <source>
        <dbReference type="PROSITE-ProRule" id="PRU00186"/>
    </source>
</evidence>
<evidence type="ECO:0000256" key="3">
    <source>
        <dbReference type="SAM" id="MobiDB-lite"/>
    </source>
</evidence>
<evidence type="ECO:0000305" key="4"/>
<organism>
    <name type="scientific">Dictyostelium discoideum</name>
    <name type="common">Social amoeba</name>
    <dbReference type="NCBI Taxonomy" id="44689"/>
    <lineage>
        <taxon>Eukaryota</taxon>
        <taxon>Amoebozoa</taxon>
        <taxon>Evosea</taxon>
        <taxon>Eumycetozoa</taxon>
        <taxon>Dictyostelia</taxon>
        <taxon>Dictyosteliales</taxon>
        <taxon>Dictyosteliaceae</taxon>
        <taxon>Dictyostelium</taxon>
    </lineage>
</organism>
<feature type="chain" id="PRO_0000377738" description="UPF0746 protein DDB_G0281095">
    <location>
        <begin position="1"/>
        <end position="1097"/>
    </location>
</feature>
<feature type="domain" description="SAP" evidence="2">
    <location>
        <begin position="35"/>
        <end position="69"/>
    </location>
</feature>
<feature type="region of interest" description="Disordered" evidence="3">
    <location>
        <begin position="1"/>
        <end position="24"/>
    </location>
</feature>
<feature type="coiled-coil region" evidence="1">
    <location>
        <begin position="329"/>
        <end position="521"/>
    </location>
</feature>
<feature type="compositionally biased region" description="Basic and acidic residues" evidence="3">
    <location>
        <begin position="1"/>
        <end position="11"/>
    </location>
</feature>
<feature type="compositionally biased region" description="Acidic residues" evidence="3">
    <location>
        <begin position="12"/>
        <end position="22"/>
    </location>
</feature>
<dbReference type="EMBL" id="AAFI02000040">
    <property type="protein sequence ID" value="EAL66844.1"/>
    <property type="molecule type" value="Genomic_DNA"/>
</dbReference>
<dbReference type="RefSeq" id="XP_640813.1">
    <property type="nucleotide sequence ID" value="XM_635721.1"/>
</dbReference>
<dbReference type="SMR" id="Q54UG3"/>
<dbReference type="FunCoup" id="Q54UG3">
    <property type="interactions" value="4"/>
</dbReference>
<dbReference type="PaxDb" id="44689-DDB0220667"/>
<dbReference type="EnsemblProtists" id="EAL66844">
    <property type="protein sequence ID" value="EAL66844"/>
    <property type="gene ID" value="DDB_G0281095"/>
</dbReference>
<dbReference type="GeneID" id="8622867"/>
<dbReference type="KEGG" id="ddi:DDB_G0281095"/>
<dbReference type="dictyBase" id="DDB_G0281095"/>
<dbReference type="VEuPathDB" id="AmoebaDB:DDB_G0281095"/>
<dbReference type="eggNOG" id="KOG0516">
    <property type="taxonomic scope" value="Eukaryota"/>
</dbReference>
<dbReference type="HOGENOM" id="CLU_283779_0_0_1"/>
<dbReference type="InParanoid" id="Q54UG3"/>
<dbReference type="OMA" id="FIISPRM"/>
<dbReference type="PhylomeDB" id="Q54UG3"/>
<dbReference type="PRO" id="PR:Q54UG3"/>
<dbReference type="Proteomes" id="UP000002195">
    <property type="component" value="Chromosome 3"/>
</dbReference>
<dbReference type="GO" id="GO:0003677">
    <property type="term" value="F:DNA binding"/>
    <property type="evidence" value="ECO:0007669"/>
    <property type="project" value="UniProtKB-KW"/>
</dbReference>
<dbReference type="InterPro" id="IPR003034">
    <property type="entry name" value="SAP_dom"/>
</dbReference>
<dbReference type="InterPro" id="IPR051904">
    <property type="entry name" value="UPF0746_actin_org"/>
</dbReference>
<dbReference type="PANTHER" id="PTHR32488">
    <property type="entry name" value="UPF0746 PROTEIN DDB_G0280785-RELATED"/>
    <property type="match status" value="1"/>
</dbReference>
<dbReference type="PANTHER" id="PTHR32488:SF86">
    <property type="entry name" value="UPF0746 PROTEIN DDB_G0280785-RELATED"/>
    <property type="match status" value="1"/>
</dbReference>
<dbReference type="Pfam" id="PF18953">
    <property type="entry name" value="SAP_new25"/>
    <property type="match status" value="1"/>
</dbReference>
<dbReference type="SMART" id="SM00513">
    <property type="entry name" value="SAP"/>
    <property type="match status" value="1"/>
</dbReference>
<dbReference type="PROSITE" id="PS50800">
    <property type="entry name" value="SAP"/>
    <property type="match status" value="1"/>
</dbReference>